<gene>
    <name type="ordered locus">MT3292</name>
</gene>
<keyword id="KW-0560">Oxidoreductase</keyword>
<keyword id="KW-1185">Reference proteome</keyword>
<name>Y3198_MYCTO</name>
<reference key="1">
    <citation type="journal article" date="2002" name="J. Bacteriol.">
        <title>Whole-genome comparison of Mycobacterium tuberculosis clinical and laboratory strains.</title>
        <authorList>
            <person name="Fleischmann R.D."/>
            <person name="Alland D."/>
            <person name="Eisen J.A."/>
            <person name="Carpenter L."/>
            <person name="White O."/>
            <person name="Peterson J.D."/>
            <person name="DeBoy R.T."/>
            <person name="Dodson R.J."/>
            <person name="Gwinn M.L."/>
            <person name="Haft D.H."/>
            <person name="Hickey E.K."/>
            <person name="Kolonay J.F."/>
            <person name="Nelson W.C."/>
            <person name="Umayam L.A."/>
            <person name="Ermolaeva M.D."/>
            <person name="Salzberg S.L."/>
            <person name="Delcher A."/>
            <person name="Utterback T.R."/>
            <person name="Weidman J.F."/>
            <person name="Khouri H.M."/>
            <person name="Gill J."/>
            <person name="Mikula A."/>
            <person name="Bishai W."/>
            <person name="Jacobs W.R. Jr."/>
            <person name="Venter J.C."/>
            <person name="Fraser C.M."/>
        </authorList>
    </citation>
    <scope>NUCLEOTIDE SEQUENCE [LARGE SCALE GENOMIC DNA]</scope>
    <source>
        <strain>CDC 1551 / Oshkosh</strain>
    </source>
</reference>
<proteinExistence type="predicted"/>
<dbReference type="EC" id="1.-.-.-"/>
<dbReference type="EMBL" id="AE000516">
    <property type="protein sequence ID" value="AAK47635.1"/>
    <property type="molecule type" value="Genomic_DNA"/>
</dbReference>
<dbReference type="BMRB" id="P9WN16"/>
<dbReference type="SMR" id="P9WN16"/>
<dbReference type="KEGG" id="mtc:MT3292"/>
<dbReference type="PATRIC" id="fig|83331.31.peg.3545"/>
<dbReference type="HOGENOM" id="CLU_026126_11_1_11"/>
<dbReference type="Proteomes" id="UP000001020">
    <property type="component" value="Chromosome"/>
</dbReference>
<dbReference type="GO" id="GO:0009055">
    <property type="term" value="F:electron transfer activity"/>
    <property type="evidence" value="ECO:0007669"/>
    <property type="project" value="TreeGrafter"/>
</dbReference>
<dbReference type="GO" id="GO:0016491">
    <property type="term" value="F:oxidoreductase activity"/>
    <property type="evidence" value="ECO:0007669"/>
    <property type="project" value="UniProtKB-KW"/>
</dbReference>
<dbReference type="GO" id="GO:0045454">
    <property type="term" value="P:cell redox homeostasis"/>
    <property type="evidence" value="ECO:0007669"/>
    <property type="project" value="TreeGrafter"/>
</dbReference>
<dbReference type="CDD" id="cd02976">
    <property type="entry name" value="NrdH"/>
    <property type="match status" value="1"/>
</dbReference>
<dbReference type="Gene3D" id="3.40.30.10">
    <property type="entry name" value="Glutaredoxin"/>
    <property type="match status" value="1"/>
</dbReference>
<dbReference type="InterPro" id="IPR011915">
    <property type="entry name" value="GlrX_actino"/>
</dbReference>
<dbReference type="InterPro" id="IPR002109">
    <property type="entry name" value="Glutaredoxin"/>
</dbReference>
<dbReference type="InterPro" id="IPR051548">
    <property type="entry name" value="Grx-like_ET"/>
</dbReference>
<dbReference type="InterPro" id="IPR036249">
    <property type="entry name" value="Thioredoxin-like_sf"/>
</dbReference>
<dbReference type="NCBIfam" id="TIGR02200">
    <property type="entry name" value="GlrX_actino"/>
    <property type="match status" value="1"/>
</dbReference>
<dbReference type="PANTHER" id="PTHR34386">
    <property type="entry name" value="GLUTAREDOXIN"/>
    <property type="match status" value="1"/>
</dbReference>
<dbReference type="PANTHER" id="PTHR34386:SF1">
    <property type="entry name" value="GLUTAREDOXIN-LIKE PROTEIN NRDH"/>
    <property type="match status" value="1"/>
</dbReference>
<dbReference type="Pfam" id="PF00462">
    <property type="entry name" value="Glutaredoxin"/>
    <property type="match status" value="1"/>
</dbReference>
<dbReference type="SUPFAM" id="SSF52833">
    <property type="entry name" value="Thioredoxin-like"/>
    <property type="match status" value="1"/>
</dbReference>
<dbReference type="PROSITE" id="PS51354">
    <property type="entry name" value="GLUTAREDOXIN_2"/>
    <property type="match status" value="1"/>
</dbReference>
<sequence>MITAALTIYTTSWCGYCLRLKTALTANRIAYDEVDIEHNRAAAEFVGSVNGGNRTVPTVKFADGSTLTNPSADEVKAKLVKIAG</sequence>
<protein>
    <recommendedName>
        <fullName>Putative glutaredoxin MT3292</fullName>
        <ecNumber>1.-.-.-</ecNumber>
    </recommendedName>
</protein>
<feature type="chain" id="PRO_0000427205" description="Putative glutaredoxin MT3292">
    <location>
        <begin position="1"/>
        <end position="84"/>
    </location>
</feature>
<feature type="domain" description="Glutaredoxin" evidence="1">
    <location>
        <begin position="1"/>
        <end position="84"/>
    </location>
</feature>
<accession>P9WN16</accession>
<accession>L0TC42</accession>
<accession>Q6MX00</accession>
<accession>Q8VJ51</accession>
<evidence type="ECO:0000255" key="1">
    <source>
        <dbReference type="PROSITE-ProRule" id="PRU00686"/>
    </source>
</evidence>
<organism>
    <name type="scientific">Mycobacterium tuberculosis (strain CDC 1551 / Oshkosh)</name>
    <dbReference type="NCBI Taxonomy" id="83331"/>
    <lineage>
        <taxon>Bacteria</taxon>
        <taxon>Bacillati</taxon>
        <taxon>Actinomycetota</taxon>
        <taxon>Actinomycetes</taxon>
        <taxon>Mycobacteriales</taxon>
        <taxon>Mycobacteriaceae</taxon>
        <taxon>Mycobacterium</taxon>
        <taxon>Mycobacterium tuberculosis complex</taxon>
    </lineage>
</organism>